<keyword id="KW-0903">Direct protein sequencing</keyword>
<keyword id="KW-0536">Nodulation</keyword>
<keyword id="KW-0560">Oxidoreductase</keyword>
<keyword id="KW-0576">Peroxisome</keyword>
<keyword id="KW-0659">Purine metabolism</keyword>
<keyword id="KW-1185">Reference proteome</keyword>
<sequence length="309" mass="35138">MAQQEVVEGFKFEQRHGKERVRVARVWKTRQGQHFIVEWRVGITLFSDCVNSYLRDDNSDIVATDTMKNTVYAKAKECSDILSAEEFAILLAKHFVSFYQKVTGAIVNIVEKPWERVTVDGQPHEHGFKLGSEKHTTEAIVQKSGSLQLTSGIEGLSVLKTTQSGFVNFIRDKYTALPDTRERMVATEVTALWRYSYESLYSLPQKPLYFTEKYQEVKKVLADTFFGPPKGGVYSPSVQNTLYLMAKATLNRFPDIAYVSLKLPNLHFIPVNISNQDGPIVKFEDDVYLPTDEPHGSIQASLSRLWSKL</sequence>
<feature type="chain" id="PRO_0000166003" description="Uricase-2 isozyme 1">
    <location>
        <begin position="1"/>
        <end position="309"/>
    </location>
</feature>
<feature type="short sequence motif" description="Microbody targeting signal" evidence="3">
    <location>
        <begin position="307"/>
        <end position="309"/>
    </location>
</feature>
<feature type="active site" description="Charge relay system" evidence="1">
    <location>
        <position position="18"/>
    </location>
</feature>
<feature type="active site" description="Charge relay system" evidence="1">
    <location>
        <position position="64"/>
    </location>
</feature>
<feature type="active site" description="Charge relay system" evidence="1">
    <location>
        <position position="267"/>
    </location>
</feature>
<feature type="binding site" evidence="2">
    <location>
        <position position="64"/>
    </location>
    <ligand>
        <name>urate</name>
        <dbReference type="ChEBI" id="CHEBI:17775"/>
    </ligand>
</feature>
<feature type="binding site" evidence="2">
    <location>
        <position position="65"/>
    </location>
    <ligand>
        <name>urate</name>
        <dbReference type="ChEBI" id="CHEBI:17775"/>
    </ligand>
</feature>
<feature type="binding site" evidence="2">
    <location>
        <position position="166"/>
    </location>
    <ligand>
        <name>urate</name>
        <dbReference type="ChEBI" id="CHEBI:17775"/>
    </ligand>
</feature>
<feature type="binding site" evidence="2">
    <location>
        <position position="183"/>
    </location>
    <ligand>
        <name>urate</name>
        <dbReference type="ChEBI" id="CHEBI:17775"/>
    </ligand>
</feature>
<feature type="binding site" evidence="2">
    <location>
        <position position="238"/>
    </location>
    <ligand>
        <name>urate</name>
        <dbReference type="ChEBI" id="CHEBI:17775"/>
    </ligand>
</feature>
<feature type="binding site" evidence="2">
    <location>
        <position position="239"/>
    </location>
    <ligand>
        <name>urate</name>
        <dbReference type="ChEBI" id="CHEBI:17775"/>
    </ligand>
</feature>
<feature type="binding site" evidence="2">
    <location>
        <position position="265"/>
    </location>
    <ligand>
        <name>urate</name>
        <dbReference type="ChEBI" id="CHEBI:17775"/>
    </ligand>
</feature>
<feature type="sequence variant" description="In strain: cv. Akisengoku.">
    <original>Q</original>
    <variation>K</variation>
    <location>
        <position position="3"/>
    </location>
</feature>
<feature type="sequence variant">
    <original>S</original>
    <variation>T</variation>
    <location>
        <position position="235"/>
    </location>
</feature>
<feature type="sequence conflict" description="In Ref. 2; AAA33995." evidence="4" ref="2">
    <original>D</original>
    <variation>E</variation>
    <location>
        <position position="60"/>
    </location>
</feature>
<feature type="sequence conflict" description="In Ref. 4; BAA19673." evidence="4" ref="4">
    <original>Y</original>
    <variation>C</variation>
    <location>
        <position position="195"/>
    </location>
</feature>
<accession>P04670</accession>
<accession>O04105</accession>
<accession>P34805</accession>
<accession>P93160</accession>
<accession>P93161</accession>
<proteinExistence type="evidence at protein level"/>
<protein>
    <recommendedName>
        <fullName>Uricase-2 isozyme 1</fullName>
        <ecNumber>1.7.3.3</ecNumber>
    </recommendedName>
    <alternativeName>
        <fullName>Nodule-specific uricase</fullName>
    </alternativeName>
    <alternativeName>
        <fullName>Nodulin 35</fullName>
        <shortName>N-35</shortName>
    </alternativeName>
    <alternativeName>
        <fullName>Urate oxidase</fullName>
    </alternativeName>
    <alternativeName>
        <fullName>Uricase II isozyme 1</fullName>
    </alternativeName>
</protein>
<reference key="1">
    <citation type="journal article" date="1991" name="Plant Physiol.">
        <title>Soybean nodule-specific uricase (nodulin-35) is expressed and assembled into a functional tetrameric holoenzyme in Escherichia coli.</title>
        <authorList>
            <person name="Suzuki H."/>
            <person name="Verma D.P.S."/>
        </authorList>
    </citation>
    <scope>NUCLEOTIDE SEQUENCE [MRNA]</scope>
    <source>
        <strain>cv. Prize</strain>
    </source>
</reference>
<reference key="2">
    <citation type="journal article" date="1985" name="Proc. Natl. Acad. Sci. U.S.A.">
        <title>Primary structure of the soybean nodulin-35 gene encoding uricase II localized in the peroxisome of uninfected cells of nodules.</title>
        <authorList>
            <person name="Nguyen T."/>
            <person name="Zelechowska M."/>
            <person name="Foster V."/>
            <person name="Bergmann H."/>
            <person name="Verma D.P.S."/>
        </authorList>
    </citation>
    <scope>NUCLEOTIDE SEQUENCE [MRNA]</scope>
    <scope>PROTEIN SEQUENCE OF 245-262</scope>
    <source>
        <strain>cv. Prize</strain>
    </source>
</reference>
<reference key="3">
    <citation type="journal article" date="1997" name="Plant Cell Physiol.">
        <title>Expression of a gene for uricase II (nodulin-35) in cotyledons of soybean plants.</title>
        <authorList>
            <person name="Takane K."/>
            <person name="Tanaka K."/>
            <person name="Tajima S."/>
            <person name="Okazaki K."/>
            <person name="Kouchi H."/>
        </authorList>
    </citation>
    <scope>NUCLEOTIDE SEQUENCE [MRNA]</scope>
    <source>
        <strain>cv. Akisengoku</strain>
        <tissue>Cotyledon</tissue>
        <tissue>Root nodule</tissue>
    </source>
</reference>
<reference key="4">
    <citation type="journal article" date="1997" name="Mol. Plant Microbe Interact.">
        <title>Two distinct uricase II (nodulin 35) genes are differentially expressed in soybean plants.</title>
        <authorList>
            <person name="Takane K."/>
            <person name="Tajima S."/>
            <person name="Kouchi H."/>
        </authorList>
    </citation>
    <scope>NUCLEOTIDE SEQUENCE [MRNA]</scope>
    <source>
        <strain>cv. Akisengoku</strain>
        <tissue>Root nodule</tissue>
    </source>
</reference>
<name>URIC1_SOYBN</name>
<evidence type="ECO:0000250" key="1">
    <source>
        <dbReference type="UniProtKB" id="D0VWQ1"/>
    </source>
</evidence>
<evidence type="ECO:0000250" key="2">
    <source>
        <dbReference type="UniProtKB" id="Q00511"/>
    </source>
</evidence>
<evidence type="ECO:0000255" key="3"/>
<evidence type="ECO:0000305" key="4"/>
<dbReference type="EC" id="1.7.3.3"/>
<dbReference type="EMBL" id="M63743">
    <property type="protein sequence ID" value="AAA33997.1"/>
    <property type="molecule type" value="mRNA"/>
</dbReference>
<dbReference type="EMBL" id="M95400">
    <property type="protein sequence ID" value="AAA34019.1"/>
    <property type="molecule type" value="mRNA"/>
</dbReference>
<dbReference type="EMBL" id="L00353">
    <property type="protein sequence ID" value="AAA33995.1"/>
    <property type="molecule type" value="mRNA"/>
</dbReference>
<dbReference type="EMBL" id="D86929">
    <property type="protein sequence ID" value="BAA13184.1"/>
    <property type="molecule type" value="mRNA"/>
</dbReference>
<dbReference type="EMBL" id="D86930">
    <property type="protein sequence ID" value="BAA13185.1"/>
    <property type="molecule type" value="mRNA"/>
</dbReference>
<dbReference type="EMBL" id="AB002810">
    <property type="protein sequence ID" value="BAA19673.1"/>
    <property type="molecule type" value="mRNA"/>
</dbReference>
<dbReference type="PIR" id="A25776">
    <property type="entry name" value="A25776"/>
</dbReference>
<dbReference type="RefSeq" id="NP_001236691.1">
    <property type="nucleotide sequence ID" value="NM_001249762.1"/>
</dbReference>
<dbReference type="SMR" id="P04670"/>
<dbReference type="FunCoup" id="P04670">
    <property type="interactions" value="2451"/>
</dbReference>
<dbReference type="STRING" id="3847.P04670"/>
<dbReference type="PaxDb" id="3847-GLYMA10G23790.1"/>
<dbReference type="ProMEX" id="P04670"/>
<dbReference type="GeneID" id="547453"/>
<dbReference type="KEGG" id="gmx:547453"/>
<dbReference type="eggNOG" id="KOG1599">
    <property type="taxonomic scope" value="Eukaryota"/>
</dbReference>
<dbReference type="HOGENOM" id="CLU_048151_1_1_1"/>
<dbReference type="InParanoid" id="P04670"/>
<dbReference type="OrthoDB" id="9992118at2759"/>
<dbReference type="BioCyc" id="MetaCyc:MONOMER-1265"/>
<dbReference type="UniPathway" id="UPA00394">
    <property type="reaction ID" value="UER00650"/>
</dbReference>
<dbReference type="Proteomes" id="UP000008827">
    <property type="component" value="Unplaced"/>
</dbReference>
<dbReference type="GO" id="GO:0005777">
    <property type="term" value="C:peroxisome"/>
    <property type="evidence" value="ECO:0000318"/>
    <property type="project" value="GO_Central"/>
</dbReference>
<dbReference type="GO" id="GO:0004846">
    <property type="term" value="F:urate oxidase activity"/>
    <property type="evidence" value="ECO:0000318"/>
    <property type="project" value="GO_Central"/>
</dbReference>
<dbReference type="GO" id="GO:0009877">
    <property type="term" value="P:nodulation"/>
    <property type="evidence" value="ECO:0007669"/>
    <property type="project" value="UniProtKB-KW"/>
</dbReference>
<dbReference type="GO" id="GO:0006145">
    <property type="term" value="P:purine nucleobase catabolic process"/>
    <property type="evidence" value="ECO:0000318"/>
    <property type="project" value="GO_Central"/>
</dbReference>
<dbReference type="GO" id="GO:0019628">
    <property type="term" value="P:urate catabolic process"/>
    <property type="evidence" value="ECO:0000318"/>
    <property type="project" value="GO_Central"/>
</dbReference>
<dbReference type="CDD" id="cd00445">
    <property type="entry name" value="Uricase"/>
    <property type="match status" value="1"/>
</dbReference>
<dbReference type="FunFam" id="3.10.270.10:FF:000001">
    <property type="entry name" value="Uricase"/>
    <property type="match status" value="1"/>
</dbReference>
<dbReference type="Gene3D" id="3.10.270.10">
    <property type="entry name" value="Urate Oxidase"/>
    <property type="match status" value="1"/>
</dbReference>
<dbReference type="InterPro" id="IPR002042">
    <property type="entry name" value="Uricase"/>
</dbReference>
<dbReference type="InterPro" id="IPR019842">
    <property type="entry name" value="Uricase_CS"/>
</dbReference>
<dbReference type="NCBIfam" id="TIGR03383">
    <property type="entry name" value="urate_oxi"/>
    <property type="match status" value="1"/>
</dbReference>
<dbReference type="PANTHER" id="PTHR42874">
    <property type="entry name" value="URICASE"/>
    <property type="match status" value="1"/>
</dbReference>
<dbReference type="PANTHER" id="PTHR42874:SF1">
    <property type="entry name" value="URICASE"/>
    <property type="match status" value="1"/>
</dbReference>
<dbReference type="Pfam" id="PF01014">
    <property type="entry name" value="Uricase"/>
    <property type="match status" value="2"/>
</dbReference>
<dbReference type="PIRSF" id="PIRSF000241">
    <property type="entry name" value="Urate_oxidase"/>
    <property type="match status" value="1"/>
</dbReference>
<dbReference type="PRINTS" id="PR00093">
    <property type="entry name" value="URICASE"/>
</dbReference>
<dbReference type="SUPFAM" id="SSF55620">
    <property type="entry name" value="Tetrahydrobiopterin biosynthesis enzymes-like"/>
    <property type="match status" value="2"/>
</dbReference>
<dbReference type="PROSITE" id="PS00366">
    <property type="entry name" value="URICASE"/>
    <property type="match status" value="1"/>
</dbReference>
<comment type="function">
    <text>Catalyzes the oxidation of uric acid to 5-hydroxyisourate, which is further processed to form (S)-allantoin.</text>
</comment>
<comment type="catalytic activity">
    <reaction>
        <text>urate + O2 + H2O = 5-hydroxyisourate + H2O2</text>
        <dbReference type="Rhea" id="RHEA:21368"/>
        <dbReference type="ChEBI" id="CHEBI:15377"/>
        <dbReference type="ChEBI" id="CHEBI:15379"/>
        <dbReference type="ChEBI" id="CHEBI:16240"/>
        <dbReference type="ChEBI" id="CHEBI:17775"/>
        <dbReference type="ChEBI" id="CHEBI:18072"/>
        <dbReference type="EC" id="1.7.3.3"/>
    </reaction>
</comment>
<comment type="pathway">
    <text>Purine metabolism; urate degradation; (S)-allantoin from urate: step 1/3.</text>
</comment>
<comment type="subunit">
    <text>Homotetramer.</text>
</comment>
<comment type="subcellular location">
    <subcellularLocation>
        <location>Peroxisome</location>
    </subcellularLocation>
</comment>
<comment type="tissue specificity">
    <text>Expressed predominantly in the uninfected cells of the central tissue of the root nodule.</text>
</comment>
<comment type="induction">
    <text>During nodulation in legume roots after Rhizobium infection.</text>
</comment>
<comment type="PTM">
    <text>The N-terminus is blocked.</text>
</comment>
<comment type="similarity">
    <text evidence="4">Belongs to the uricase family.</text>
</comment>
<organism>
    <name type="scientific">Glycine max</name>
    <name type="common">Soybean</name>
    <name type="synonym">Glycine hispida</name>
    <dbReference type="NCBI Taxonomy" id="3847"/>
    <lineage>
        <taxon>Eukaryota</taxon>
        <taxon>Viridiplantae</taxon>
        <taxon>Streptophyta</taxon>
        <taxon>Embryophyta</taxon>
        <taxon>Tracheophyta</taxon>
        <taxon>Spermatophyta</taxon>
        <taxon>Magnoliopsida</taxon>
        <taxon>eudicotyledons</taxon>
        <taxon>Gunneridae</taxon>
        <taxon>Pentapetalae</taxon>
        <taxon>rosids</taxon>
        <taxon>fabids</taxon>
        <taxon>Fabales</taxon>
        <taxon>Fabaceae</taxon>
        <taxon>Papilionoideae</taxon>
        <taxon>50 kb inversion clade</taxon>
        <taxon>NPAAA clade</taxon>
        <taxon>indigoferoid/millettioid clade</taxon>
        <taxon>Phaseoleae</taxon>
        <taxon>Glycine</taxon>
        <taxon>Glycine subgen. Soja</taxon>
    </lineage>
</organism>